<dbReference type="EMBL" id="CP000038">
    <property type="protein sequence ID" value="AAZ88902.1"/>
    <property type="molecule type" value="Genomic_DNA"/>
</dbReference>
<dbReference type="RefSeq" id="WP_001026410.1">
    <property type="nucleotide sequence ID" value="NC_007384.1"/>
</dbReference>
<dbReference type="SMR" id="Q3Z010"/>
<dbReference type="GeneID" id="93774981"/>
<dbReference type="KEGG" id="ssn:SSON_2255"/>
<dbReference type="HOGENOM" id="CLU_079503_1_0_6"/>
<dbReference type="Proteomes" id="UP000002529">
    <property type="component" value="Chromosome"/>
</dbReference>
<dbReference type="GO" id="GO:0005886">
    <property type="term" value="C:plasma membrane"/>
    <property type="evidence" value="ECO:0007669"/>
    <property type="project" value="UniProtKB-SubCell"/>
</dbReference>
<dbReference type="GO" id="GO:0020037">
    <property type="term" value="F:heme binding"/>
    <property type="evidence" value="ECO:0007669"/>
    <property type="project" value="InterPro"/>
</dbReference>
<dbReference type="GO" id="GO:0046872">
    <property type="term" value="F:metal ion binding"/>
    <property type="evidence" value="ECO:0007669"/>
    <property type="project" value="UniProtKB-KW"/>
</dbReference>
<dbReference type="GO" id="GO:0017004">
    <property type="term" value="P:cytochrome complex assembly"/>
    <property type="evidence" value="ECO:0007669"/>
    <property type="project" value="UniProtKB-KW"/>
</dbReference>
<dbReference type="FunFam" id="2.40.50.140:FF:000104">
    <property type="entry name" value="Cytochrome c-type biogenesis protein CcmE"/>
    <property type="match status" value="1"/>
</dbReference>
<dbReference type="Gene3D" id="2.40.50.140">
    <property type="entry name" value="Nucleic acid-binding proteins"/>
    <property type="match status" value="1"/>
</dbReference>
<dbReference type="HAMAP" id="MF_01959">
    <property type="entry name" value="CcmE"/>
    <property type="match status" value="1"/>
</dbReference>
<dbReference type="InterPro" id="IPR004329">
    <property type="entry name" value="CcmE"/>
</dbReference>
<dbReference type="InterPro" id="IPR036127">
    <property type="entry name" value="CcmE-like_sf"/>
</dbReference>
<dbReference type="InterPro" id="IPR012340">
    <property type="entry name" value="NA-bd_OB-fold"/>
</dbReference>
<dbReference type="NCBIfam" id="NF009635">
    <property type="entry name" value="PRK13150.1"/>
    <property type="match status" value="1"/>
</dbReference>
<dbReference type="NCBIfam" id="NF009638">
    <property type="entry name" value="PRK13165.1"/>
    <property type="match status" value="1"/>
</dbReference>
<dbReference type="NCBIfam" id="NF009727">
    <property type="entry name" value="PRK13254.1-1"/>
    <property type="match status" value="1"/>
</dbReference>
<dbReference type="NCBIfam" id="NF009729">
    <property type="entry name" value="PRK13254.1-3"/>
    <property type="match status" value="1"/>
</dbReference>
<dbReference type="PANTHER" id="PTHR34128">
    <property type="entry name" value="CYTOCHROME C-TYPE BIOGENESIS PROTEIN CCME HOMOLOG, MITOCHONDRIAL"/>
    <property type="match status" value="1"/>
</dbReference>
<dbReference type="PANTHER" id="PTHR34128:SF2">
    <property type="entry name" value="CYTOCHROME C-TYPE BIOGENESIS PROTEIN CCME HOMOLOG, MITOCHONDRIAL"/>
    <property type="match status" value="1"/>
</dbReference>
<dbReference type="Pfam" id="PF03100">
    <property type="entry name" value="CcmE"/>
    <property type="match status" value="1"/>
</dbReference>
<dbReference type="SUPFAM" id="SSF82093">
    <property type="entry name" value="Heme chaperone CcmE"/>
    <property type="match status" value="1"/>
</dbReference>
<proteinExistence type="inferred from homology"/>
<gene>
    <name evidence="1" type="primary">ccmE</name>
    <name evidence="1" type="synonym">cycJ</name>
    <name type="ordered locus">SSON_2255</name>
</gene>
<feature type="chain" id="PRO_0000238867" description="Cytochrome c-type biogenesis protein CcmE">
    <location>
        <begin position="1"/>
        <end position="159"/>
    </location>
</feature>
<feature type="topological domain" description="Cytoplasmic" evidence="1">
    <location>
        <begin position="1"/>
        <end position="8"/>
    </location>
</feature>
<feature type="transmembrane region" description="Helical; Signal-anchor for type II membrane protein" evidence="1">
    <location>
        <begin position="9"/>
        <end position="29"/>
    </location>
</feature>
<feature type="topological domain" description="Periplasmic" evidence="1">
    <location>
        <begin position="30"/>
        <end position="159"/>
    </location>
</feature>
<feature type="region of interest" description="Disordered" evidence="2">
    <location>
        <begin position="132"/>
        <end position="159"/>
    </location>
</feature>
<feature type="compositionally biased region" description="Basic and acidic residues" evidence="2">
    <location>
        <begin position="132"/>
        <end position="147"/>
    </location>
</feature>
<feature type="binding site" description="covalent" evidence="1">
    <location>
        <position position="130"/>
    </location>
    <ligand>
        <name>heme</name>
        <dbReference type="ChEBI" id="CHEBI:30413"/>
    </ligand>
</feature>
<feature type="binding site" description="axial binding residue" evidence="1">
    <location>
        <position position="134"/>
    </location>
    <ligand>
        <name>heme</name>
        <dbReference type="ChEBI" id="CHEBI:30413"/>
    </ligand>
    <ligandPart>
        <name>Fe</name>
        <dbReference type="ChEBI" id="CHEBI:18248"/>
    </ligandPart>
</feature>
<organism>
    <name type="scientific">Shigella sonnei (strain Ss046)</name>
    <dbReference type="NCBI Taxonomy" id="300269"/>
    <lineage>
        <taxon>Bacteria</taxon>
        <taxon>Pseudomonadati</taxon>
        <taxon>Pseudomonadota</taxon>
        <taxon>Gammaproteobacteria</taxon>
        <taxon>Enterobacterales</taxon>
        <taxon>Enterobacteriaceae</taxon>
        <taxon>Shigella</taxon>
    </lineage>
</organism>
<sequence>MNIRRKNRLWIACAVLAGLALTIGLVLYALRSNIDLFYTPGEILYGKRETQQMPEVGQRLRVGGMVMLGSVQRDPNSLKVTFTIYDAEGSVDVSYEGILPDLFREGQGVVVQGELEKGNHILAKEVLAKHDENYTPPEVEKAMEANHRRPASVYKDPAS</sequence>
<keyword id="KW-0997">Cell inner membrane</keyword>
<keyword id="KW-1003">Cell membrane</keyword>
<keyword id="KW-0201">Cytochrome c-type biogenesis</keyword>
<keyword id="KW-0349">Heme</keyword>
<keyword id="KW-0408">Iron</keyword>
<keyword id="KW-0472">Membrane</keyword>
<keyword id="KW-0479">Metal-binding</keyword>
<keyword id="KW-1185">Reference proteome</keyword>
<keyword id="KW-0735">Signal-anchor</keyword>
<keyword id="KW-0812">Transmembrane</keyword>
<keyword id="KW-1133">Transmembrane helix</keyword>
<reference key="1">
    <citation type="journal article" date="2005" name="Nucleic Acids Res.">
        <title>Genome dynamics and diversity of Shigella species, the etiologic agents of bacillary dysentery.</title>
        <authorList>
            <person name="Yang F."/>
            <person name="Yang J."/>
            <person name="Zhang X."/>
            <person name="Chen L."/>
            <person name="Jiang Y."/>
            <person name="Yan Y."/>
            <person name="Tang X."/>
            <person name="Wang J."/>
            <person name="Xiong Z."/>
            <person name="Dong J."/>
            <person name="Xue Y."/>
            <person name="Zhu Y."/>
            <person name="Xu X."/>
            <person name="Sun L."/>
            <person name="Chen S."/>
            <person name="Nie H."/>
            <person name="Peng J."/>
            <person name="Xu J."/>
            <person name="Wang Y."/>
            <person name="Yuan Z."/>
            <person name="Wen Y."/>
            <person name="Yao Z."/>
            <person name="Shen Y."/>
            <person name="Qiang B."/>
            <person name="Hou Y."/>
            <person name="Yu J."/>
            <person name="Jin Q."/>
        </authorList>
    </citation>
    <scope>NUCLEOTIDE SEQUENCE [LARGE SCALE GENOMIC DNA]</scope>
    <source>
        <strain>Ss046</strain>
    </source>
</reference>
<protein>
    <recommendedName>
        <fullName evidence="1">Cytochrome c-type biogenesis protein CcmE</fullName>
    </recommendedName>
    <alternativeName>
        <fullName evidence="1">Cytochrome c maturation protein E</fullName>
    </alternativeName>
    <alternativeName>
        <fullName evidence="1">Heme chaperone CcmE</fullName>
    </alternativeName>
</protein>
<accession>Q3Z010</accession>
<comment type="function">
    <text evidence="1">Heme chaperone required for the biogenesis of c-type cytochromes. Transiently binds heme delivered by CcmC and transfers the heme to apo-cytochromes in a process facilitated by CcmF and CcmH.</text>
</comment>
<comment type="subcellular location">
    <subcellularLocation>
        <location evidence="1">Cell inner membrane</location>
        <topology evidence="1">Single-pass type II membrane protein</topology>
        <orientation evidence="1">Periplasmic side</orientation>
    </subcellularLocation>
</comment>
<comment type="similarity">
    <text evidence="1">Belongs to the CcmE/CycJ family.</text>
</comment>
<evidence type="ECO:0000255" key="1">
    <source>
        <dbReference type="HAMAP-Rule" id="MF_01959"/>
    </source>
</evidence>
<evidence type="ECO:0000256" key="2">
    <source>
        <dbReference type="SAM" id="MobiDB-lite"/>
    </source>
</evidence>
<name>CCME_SHISS</name>